<reference key="1">
    <citation type="journal article" date="2006" name="BMC Evol. Biol.">
        <title>Complete plastid genome sequences of Drimys, Liriodendron, and Piper: implications for the phylogenetic relationships of magnoliids.</title>
        <authorList>
            <person name="Cai Z."/>
            <person name="Penaflor C."/>
            <person name="Kuehl J.V."/>
            <person name="Leebens-Mack J."/>
            <person name="Carlson J.E."/>
            <person name="dePamphilis C.W."/>
            <person name="Boore J.L."/>
            <person name="Jansen R.K."/>
        </authorList>
    </citation>
    <scope>NUCLEOTIDE SEQUENCE [LARGE SCALE GENOMIC DNA]</scope>
</reference>
<protein>
    <recommendedName>
        <fullName evidence="2">Acetyl-coenzyme A carboxylase carboxyl transferase subunit beta, chloroplastic</fullName>
        <shortName evidence="2">ACCase subunit beta</shortName>
        <shortName evidence="2">Acetyl-CoA carboxylase carboxyltransferase subunit beta</shortName>
        <ecNumber evidence="2">2.1.3.15</ecNumber>
    </recommendedName>
</protein>
<geneLocation type="chloroplast"/>
<proteinExistence type="inferred from homology"/>
<comment type="function">
    <text evidence="2">Component of the acetyl coenzyme A carboxylase (ACC) complex. Biotin carboxylase (BC) catalyzes the carboxylation of biotin on its carrier protein (BCCP) and then the CO(2) group is transferred by the transcarboxylase to acetyl-CoA to form malonyl-CoA.</text>
</comment>
<comment type="catalytic activity">
    <reaction evidence="2">
        <text>N(6)-carboxybiotinyl-L-lysyl-[protein] + acetyl-CoA = N(6)-biotinyl-L-lysyl-[protein] + malonyl-CoA</text>
        <dbReference type="Rhea" id="RHEA:54728"/>
        <dbReference type="Rhea" id="RHEA-COMP:10505"/>
        <dbReference type="Rhea" id="RHEA-COMP:10506"/>
        <dbReference type="ChEBI" id="CHEBI:57288"/>
        <dbReference type="ChEBI" id="CHEBI:57384"/>
        <dbReference type="ChEBI" id="CHEBI:83144"/>
        <dbReference type="ChEBI" id="CHEBI:83145"/>
        <dbReference type="EC" id="2.1.3.15"/>
    </reaction>
</comment>
<comment type="cofactor">
    <cofactor evidence="2">
        <name>Zn(2+)</name>
        <dbReference type="ChEBI" id="CHEBI:29105"/>
    </cofactor>
    <text evidence="2">Binds 1 zinc ion per subunit.</text>
</comment>
<comment type="pathway">
    <text evidence="2">Lipid metabolism; malonyl-CoA biosynthesis; malonyl-CoA from acetyl-CoA: step 1/1.</text>
</comment>
<comment type="subunit">
    <text evidence="1">Acetyl-CoA carboxylase is a heterohexamer composed of biotin carboxyl carrier protein, biotin carboxylase and 2 subunits each of ACCase subunit alpha and ACCase plastid-coded subunit beta (accD).</text>
</comment>
<comment type="subcellular location">
    <subcellularLocation>
        <location evidence="2">Plastid</location>
        <location evidence="2">Chloroplast stroma</location>
    </subcellularLocation>
</comment>
<comment type="similarity">
    <text evidence="2">Belongs to the AccD/PCCB family.</text>
</comment>
<feature type="chain" id="PRO_0000359137" description="Acetyl-coenzyme A carboxylase carboxyl transferase subunit beta, chloroplastic">
    <location>
        <begin position="1"/>
        <end position="494"/>
    </location>
</feature>
<feature type="domain" description="CoA carboxyltransferase N-terminal" evidence="3">
    <location>
        <begin position="230"/>
        <end position="494"/>
    </location>
</feature>
<feature type="zinc finger region" description="C4-type" evidence="2">
    <location>
        <begin position="234"/>
        <end position="256"/>
    </location>
</feature>
<feature type="binding site" evidence="2">
    <location>
        <position position="234"/>
    </location>
    <ligand>
        <name>Zn(2+)</name>
        <dbReference type="ChEBI" id="CHEBI:29105"/>
    </ligand>
</feature>
<feature type="binding site" evidence="2">
    <location>
        <position position="237"/>
    </location>
    <ligand>
        <name>Zn(2+)</name>
        <dbReference type="ChEBI" id="CHEBI:29105"/>
    </ligand>
</feature>
<feature type="binding site" evidence="2">
    <location>
        <position position="253"/>
    </location>
    <ligand>
        <name>Zn(2+)</name>
        <dbReference type="ChEBI" id="CHEBI:29105"/>
    </ligand>
</feature>
<feature type="binding site" evidence="2">
    <location>
        <position position="256"/>
    </location>
    <ligand>
        <name>Zn(2+)</name>
        <dbReference type="ChEBI" id="CHEBI:29105"/>
    </ligand>
</feature>
<gene>
    <name evidence="2" type="primary">accD</name>
</gene>
<evidence type="ECO:0000250" key="1"/>
<evidence type="ECO:0000255" key="2">
    <source>
        <dbReference type="HAMAP-Rule" id="MF_01395"/>
    </source>
</evidence>
<evidence type="ECO:0000255" key="3">
    <source>
        <dbReference type="PROSITE-ProRule" id="PRU01136"/>
    </source>
</evidence>
<name>ACCD_DRIGR</name>
<accession>Q06GY8</accession>
<keyword id="KW-0067">ATP-binding</keyword>
<keyword id="KW-0150">Chloroplast</keyword>
<keyword id="KW-0275">Fatty acid biosynthesis</keyword>
<keyword id="KW-0276">Fatty acid metabolism</keyword>
<keyword id="KW-0444">Lipid biosynthesis</keyword>
<keyword id="KW-0443">Lipid metabolism</keyword>
<keyword id="KW-0479">Metal-binding</keyword>
<keyword id="KW-0547">Nucleotide-binding</keyword>
<keyword id="KW-0934">Plastid</keyword>
<keyword id="KW-0808">Transferase</keyword>
<keyword id="KW-0862">Zinc</keyword>
<keyword id="KW-0863">Zinc-finger</keyword>
<organism>
    <name type="scientific">Drimys granadensis</name>
    <dbReference type="NCBI Taxonomy" id="224735"/>
    <lineage>
        <taxon>Eukaryota</taxon>
        <taxon>Viridiplantae</taxon>
        <taxon>Streptophyta</taxon>
        <taxon>Embryophyta</taxon>
        <taxon>Tracheophyta</taxon>
        <taxon>Spermatophyta</taxon>
        <taxon>Magnoliopsida</taxon>
        <taxon>Magnoliidae</taxon>
        <taxon>Canellales</taxon>
        <taxon>Winteraceae</taxon>
        <taxon>Drimys</taxon>
    </lineage>
</organism>
<sequence length="494" mass="55528">MEKWWFNSMLSNEELEHRCGLSKSMNSLGRAIGNTSGSEDLIINDTDKNIHSWSDSGSYSCNNVDDLFGIRDIWSFVSDDTFLVRDSNGDSYSVYFDIENQIFQIDNDSSFLSELESSFSNYLNFSYLNSGSKSDNRYYDRYMYDIKYSWNNHINSCIDSYLHSEISIESYISSSSDNYGDSYISSFICNESVSVSDNGSSSIRTSGNGSDFNIRGRSNDFDINQKYRHLWVQCENCYGLNYKKFFRSKMNICEQCGYHLKMSSSDRIELSIDPGTWDPMDEDMVSIDPIEFHSEEEPYRDRIDSYQRKTGLTEAVQTGIGQLNGIPIAIGVMDFQFMGGSMGSVVGEKITRLIEYATNGSLPIIMVCASGGARMQEGSLSLMQMAKISSASYNYQSNKKLFYVSILTSPTTGGVTASFGMLGDIIIAEPNAYIAFAGKRVIEQTLNKTVPDGSQAAEYSFHKGLFDSIVPRNPLKGVLSELFQLHGFFPLNQN</sequence>
<dbReference type="EC" id="2.1.3.15" evidence="2"/>
<dbReference type="EMBL" id="DQ887676">
    <property type="protein sequence ID" value="ABH88306.1"/>
    <property type="molecule type" value="Genomic_DNA"/>
</dbReference>
<dbReference type="RefSeq" id="YP_784395.1">
    <property type="nucleotide sequence ID" value="NC_008456.1"/>
</dbReference>
<dbReference type="SMR" id="Q06GY8"/>
<dbReference type="GeneID" id="4363571"/>
<dbReference type="UniPathway" id="UPA00655">
    <property type="reaction ID" value="UER00711"/>
</dbReference>
<dbReference type="GO" id="GO:0009317">
    <property type="term" value="C:acetyl-CoA carboxylase complex"/>
    <property type="evidence" value="ECO:0007669"/>
    <property type="project" value="InterPro"/>
</dbReference>
<dbReference type="GO" id="GO:0009570">
    <property type="term" value="C:chloroplast stroma"/>
    <property type="evidence" value="ECO:0007669"/>
    <property type="project" value="UniProtKB-SubCell"/>
</dbReference>
<dbReference type="GO" id="GO:0003989">
    <property type="term" value="F:acetyl-CoA carboxylase activity"/>
    <property type="evidence" value="ECO:0007669"/>
    <property type="project" value="InterPro"/>
</dbReference>
<dbReference type="GO" id="GO:0005524">
    <property type="term" value="F:ATP binding"/>
    <property type="evidence" value="ECO:0007669"/>
    <property type="project" value="UniProtKB-KW"/>
</dbReference>
<dbReference type="GO" id="GO:0016743">
    <property type="term" value="F:carboxyl- or carbamoyltransferase activity"/>
    <property type="evidence" value="ECO:0007669"/>
    <property type="project" value="UniProtKB-UniRule"/>
</dbReference>
<dbReference type="GO" id="GO:0008270">
    <property type="term" value="F:zinc ion binding"/>
    <property type="evidence" value="ECO:0007669"/>
    <property type="project" value="UniProtKB-UniRule"/>
</dbReference>
<dbReference type="GO" id="GO:0006633">
    <property type="term" value="P:fatty acid biosynthetic process"/>
    <property type="evidence" value="ECO:0007669"/>
    <property type="project" value="UniProtKB-KW"/>
</dbReference>
<dbReference type="GO" id="GO:2001295">
    <property type="term" value="P:malonyl-CoA biosynthetic process"/>
    <property type="evidence" value="ECO:0007669"/>
    <property type="project" value="UniProtKB-UniRule"/>
</dbReference>
<dbReference type="Gene3D" id="3.90.226.10">
    <property type="entry name" value="2-enoyl-CoA Hydratase, Chain A, domain 1"/>
    <property type="match status" value="1"/>
</dbReference>
<dbReference type="HAMAP" id="MF_01395">
    <property type="entry name" value="AcetylCoA_CT_beta"/>
    <property type="match status" value="1"/>
</dbReference>
<dbReference type="InterPro" id="IPR034733">
    <property type="entry name" value="AcCoA_carboxyl_beta"/>
</dbReference>
<dbReference type="InterPro" id="IPR000438">
    <property type="entry name" value="Acetyl_CoA_COase_Trfase_b_su"/>
</dbReference>
<dbReference type="InterPro" id="IPR029045">
    <property type="entry name" value="ClpP/crotonase-like_dom_sf"/>
</dbReference>
<dbReference type="InterPro" id="IPR011762">
    <property type="entry name" value="COA_CT_N"/>
</dbReference>
<dbReference type="NCBIfam" id="TIGR00515">
    <property type="entry name" value="accD"/>
    <property type="match status" value="1"/>
</dbReference>
<dbReference type="PANTHER" id="PTHR42995">
    <property type="entry name" value="ACETYL-COENZYME A CARBOXYLASE CARBOXYL TRANSFERASE SUBUNIT BETA, CHLOROPLASTIC"/>
    <property type="match status" value="1"/>
</dbReference>
<dbReference type="PANTHER" id="PTHR42995:SF5">
    <property type="entry name" value="ACETYL-COENZYME A CARBOXYLASE CARBOXYL TRANSFERASE SUBUNIT BETA, CHLOROPLASTIC"/>
    <property type="match status" value="1"/>
</dbReference>
<dbReference type="Pfam" id="PF01039">
    <property type="entry name" value="Carboxyl_trans"/>
    <property type="match status" value="1"/>
</dbReference>
<dbReference type="PRINTS" id="PR01070">
    <property type="entry name" value="ACCCTRFRASEB"/>
</dbReference>
<dbReference type="SUPFAM" id="SSF52096">
    <property type="entry name" value="ClpP/crotonase"/>
    <property type="match status" value="1"/>
</dbReference>
<dbReference type="PROSITE" id="PS50980">
    <property type="entry name" value="COA_CT_NTER"/>
    <property type="match status" value="1"/>
</dbReference>